<comment type="function">
    <text evidence="1">Involved in the biogenesis of the 60S ribosomal subunit. Ensures the docking of nog1 to pre-60S particles. Activates and recruits ATPase AFG2 to cytoplasmic pre-60S ribosomal particles.</text>
</comment>
<comment type="subunit">
    <text evidence="1">Associated with nucleolar and cytoplasmic pre-60S particles. At the end of biogenesis it dissociates from cytoplasmic pre-60S particles and is likely to be exchanged for its ribosomal homolog, RPL24.</text>
</comment>
<comment type="subcellular location">
    <subcellularLocation>
        <location evidence="1">Cytoplasm</location>
    </subcellularLocation>
    <subcellularLocation>
        <location evidence="1">Nucleus</location>
    </subcellularLocation>
    <text evidence="1">Shuttles between the nucleus and the cytoplasm.</text>
</comment>
<comment type="similarity">
    <text evidence="2">Belongs to the eukaryotic ribosomal protein eL24 family.</text>
</comment>
<name>RLP24_DICDI</name>
<accession>Q86B05</accession>
<accession>Q558U6</accession>
<evidence type="ECO:0000250" key="1">
    <source>
        <dbReference type="UniProtKB" id="Q07915"/>
    </source>
</evidence>
<evidence type="ECO:0000305" key="2"/>
<organism>
    <name type="scientific">Dictyostelium discoideum</name>
    <name type="common">Social amoeba</name>
    <dbReference type="NCBI Taxonomy" id="44689"/>
    <lineage>
        <taxon>Eukaryota</taxon>
        <taxon>Amoebozoa</taxon>
        <taxon>Evosea</taxon>
        <taxon>Eumycetozoa</taxon>
        <taxon>Dictyostelia</taxon>
        <taxon>Dictyosteliales</taxon>
        <taxon>Dictyosteliaceae</taxon>
        <taxon>Dictyostelium</taxon>
    </lineage>
</organism>
<protein>
    <recommendedName>
        <fullName>Probable ribosome biogenesis protein RLP24</fullName>
    </recommendedName>
</protein>
<keyword id="KW-0963">Cytoplasm</keyword>
<keyword id="KW-0539">Nucleus</keyword>
<keyword id="KW-1185">Reference proteome</keyword>
<keyword id="KW-0690">Ribosome biogenesis</keyword>
<feature type="chain" id="PRO_0000136901" description="Probable ribosome biogenesis protein RLP24">
    <location>
        <begin position="1"/>
        <end position="164"/>
    </location>
</feature>
<feature type="sequence conflict" description="In Ref. 1; BJ418184." evidence="2" ref="1">
    <original>K</original>
    <variation>E</variation>
    <location>
        <position position="43"/>
    </location>
</feature>
<reference key="1">
    <citation type="journal article" date="2004" name="Nucleic Acids Res.">
        <title>Analyses of cDNAs from growth and slug stages of Dictyostelium discoideum.</title>
        <authorList>
            <person name="Urushihara H."/>
            <person name="Morio T."/>
            <person name="Saito T."/>
            <person name="Kohara Y."/>
            <person name="Koriki E."/>
            <person name="Ochiai H."/>
            <person name="Maeda M."/>
            <person name="Williams J.G."/>
            <person name="Takeuchi I."/>
            <person name="Tanaka Y."/>
        </authorList>
    </citation>
    <scope>NUCLEOTIDE SEQUENCE [LARGE SCALE MRNA]</scope>
    <source>
        <strain>AX4</strain>
    </source>
</reference>
<reference key="2">
    <citation type="journal article" date="2002" name="Nature">
        <title>Sequence and analysis of chromosome 2 of Dictyostelium discoideum.</title>
        <authorList>
            <person name="Gloeckner G."/>
            <person name="Eichinger L."/>
            <person name="Szafranski K."/>
            <person name="Pachebat J.A."/>
            <person name="Bankier A.T."/>
            <person name="Dear P.H."/>
            <person name="Lehmann R."/>
            <person name="Baumgart C."/>
            <person name="Parra G."/>
            <person name="Abril J.F."/>
            <person name="Guigo R."/>
            <person name="Kumpf K."/>
            <person name="Tunggal B."/>
            <person name="Cox E.C."/>
            <person name="Quail M.A."/>
            <person name="Platzer M."/>
            <person name="Rosenthal A."/>
            <person name="Noegel A.A."/>
        </authorList>
    </citation>
    <scope>NUCLEOTIDE SEQUENCE [LARGE SCALE GENOMIC DNA]</scope>
    <source>
        <strain>AX4</strain>
    </source>
</reference>
<reference key="3">
    <citation type="journal article" date="2005" name="Nature">
        <title>The genome of the social amoeba Dictyostelium discoideum.</title>
        <authorList>
            <person name="Eichinger L."/>
            <person name="Pachebat J.A."/>
            <person name="Gloeckner G."/>
            <person name="Rajandream M.A."/>
            <person name="Sucgang R."/>
            <person name="Berriman M."/>
            <person name="Song J."/>
            <person name="Olsen R."/>
            <person name="Szafranski K."/>
            <person name="Xu Q."/>
            <person name="Tunggal B."/>
            <person name="Kummerfeld S."/>
            <person name="Madera M."/>
            <person name="Konfortov B.A."/>
            <person name="Rivero F."/>
            <person name="Bankier A.T."/>
            <person name="Lehmann R."/>
            <person name="Hamlin N."/>
            <person name="Davies R."/>
            <person name="Gaudet P."/>
            <person name="Fey P."/>
            <person name="Pilcher K."/>
            <person name="Chen G."/>
            <person name="Saunders D."/>
            <person name="Sodergren E.J."/>
            <person name="Davis P."/>
            <person name="Kerhornou A."/>
            <person name="Nie X."/>
            <person name="Hall N."/>
            <person name="Anjard C."/>
            <person name="Hemphill L."/>
            <person name="Bason N."/>
            <person name="Farbrother P."/>
            <person name="Desany B."/>
            <person name="Just E."/>
            <person name="Morio T."/>
            <person name="Rost R."/>
            <person name="Churcher C.M."/>
            <person name="Cooper J."/>
            <person name="Haydock S."/>
            <person name="van Driessche N."/>
            <person name="Cronin A."/>
            <person name="Goodhead I."/>
            <person name="Muzny D.M."/>
            <person name="Mourier T."/>
            <person name="Pain A."/>
            <person name="Lu M."/>
            <person name="Harper D."/>
            <person name="Lindsay R."/>
            <person name="Hauser H."/>
            <person name="James K.D."/>
            <person name="Quiles M."/>
            <person name="Madan Babu M."/>
            <person name="Saito T."/>
            <person name="Buchrieser C."/>
            <person name="Wardroper A."/>
            <person name="Felder M."/>
            <person name="Thangavelu M."/>
            <person name="Johnson D."/>
            <person name="Knights A."/>
            <person name="Loulseged H."/>
            <person name="Mungall K.L."/>
            <person name="Oliver K."/>
            <person name="Price C."/>
            <person name="Quail M.A."/>
            <person name="Urushihara H."/>
            <person name="Hernandez J."/>
            <person name="Rabbinowitsch E."/>
            <person name="Steffen D."/>
            <person name="Sanders M."/>
            <person name="Ma J."/>
            <person name="Kohara Y."/>
            <person name="Sharp S."/>
            <person name="Simmonds M.N."/>
            <person name="Spiegler S."/>
            <person name="Tivey A."/>
            <person name="Sugano S."/>
            <person name="White B."/>
            <person name="Walker D."/>
            <person name="Woodward J.R."/>
            <person name="Winckler T."/>
            <person name="Tanaka Y."/>
            <person name="Shaulsky G."/>
            <person name="Schleicher M."/>
            <person name="Weinstock G.M."/>
            <person name="Rosenthal A."/>
            <person name="Cox E.C."/>
            <person name="Chisholm R.L."/>
            <person name="Gibbs R.A."/>
            <person name="Loomis W.F."/>
            <person name="Platzer M."/>
            <person name="Kay R.R."/>
            <person name="Williams J.G."/>
            <person name="Dear P.H."/>
            <person name="Noegel A.A."/>
            <person name="Barrell B.G."/>
            <person name="Kuspa A."/>
        </authorList>
    </citation>
    <scope>NUCLEOTIDE SEQUENCE [LARGE SCALE GENOMIC DNA]</scope>
    <source>
        <strain>AX4</strain>
    </source>
</reference>
<dbReference type="EMBL" id="AU266916">
    <property type="status" value="NOT_ANNOTATED_CDS"/>
    <property type="molecule type" value="mRNA"/>
</dbReference>
<dbReference type="EMBL" id="BJ418184">
    <property type="status" value="NOT_ANNOTATED_CDS"/>
    <property type="molecule type" value="mRNA"/>
</dbReference>
<dbReference type="EMBL" id="AAFI02000008">
    <property type="protein sequence ID" value="EAL71032.1"/>
    <property type="molecule type" value="Genomic_DNA"/>
</dbReference>
<dbReference type="RefSeq" id="XP_644970.1">
    <property type="nucleotide sequence ID" value="XM_639878.1"/>
</dbReference>
<dbReference type="SMR" id="Q86B05"/>
<dbReference type="FunCoup" id="Q86B05">
    <property type="interactions" value="682"/>
</dbReference>
<dbReference type="STRING" id="44689.Q86B05"/>
<dbReference type="PaxDb" id="44689-DDB0234227"/>
<dbReference type="EnsemblProtists" id="EAL71032">
    <property type="protein sequence ID" value="EAL71032"/>
    <property type="gene ID" value="DDB_G0272789"/>
</dbReference>
<dbReference type="GeneID" id="8618647"/>
<dbReference type="KEGG" id="ddi:DDB_G0272789"/>
<dbReference type="dictyBase" id="DDB_G0272789">
    <property type="gene designation" value="rlp24"/>
</dbReference>
<dbReference type="VEuPathDB" id="AmoebaDB:DDB_G0272789"/>
<dbReference type="eggNOG" id="KOG1723">
    <property type="taxonomic scope" value="Eukaryota"/>
</dbReference>
<dbReference type="HOGENOM" id="CLU_089419_2_0_1"/>
<dbReference type="InParanoid" id="Q86B05"/>
<dbReference type="OMA" id="TCYFCSG"/>
<dbReference type="PhylomeDB" id="Q86B05"/>
<dbReference type="PRO" id="PR:Q86B05"/>
<dbReference type="Proteomes" id="UP000002195">
    <property type="component" value="Chromosome 2"/>
</dbReference>
<dbReference type="GO" id="GO:0005737">
    <property type="term" value="C:cytoplasm"/>
    <property type="evidence" value="ECO:0007669"/>
    <property type="project" value="UniProtKB-SubCell"/>
</dbReference>
<dbReference type="GO" id="GO:0005730">
    <property type="term" value="C:nucleolus"/>
    <property type="evidence" value="ECO:0000318"/>
    <property type="project" value="GO_Central"/>
</dbReference>
<dbReference type="GO" id="GO:0003735">
    <property type="term" value="F:structural constituent of ribosome"/>
    <property type="evidence" value="ECO:0007669"/>
    <property type="project" value="InterPro"/>
</dbReference>
<dbReference type="GO" id="GO:0042273">
    <property type="term" value="P:ribosomal large subunit biogenesis"/>
    <property type="evidence" value="ECO:0000250"/>
    <property type="project" value="dictyBase"/>
</dbReference>
<dbReference type="CDD" id="cd00472">
    <property type="entry name" value="Ribosomal_L24e_L24"/>
    <property type="match status" value="1"/>
</dbReference>
<dbReference type="FunFam" id="2.30.170.20:FF:000001">
    <property type="entry name" value="probable ribosome biogenesis protein RLP24"/>
    <property type="match status" value="1"/>
</dbReference>
<dbReference type="Gene3D" id="2.30.170.20">
    <property type="entry name" value="Ribosomal protein L24e"/>
    <property type="match status" value="1"/>
</dbReference>
<dbReference type="InterPro" id="IPR038630">
    <property type="entry name" value="L24e/L24_sf"/>
</dbReference>
<dbReference type="InterPro" id="IPR056366">
    <property type="entry name" value="Ribosomal_eL24"/>
</dbReference>
<dbReference type="InterPro" id="IPR000988">
    <property type="entry name" value="Ribosomal_eL24-rel_N"/>
</dbReference>
<dbReference type="InterPro" id="IPR023442">
    <property type="entry name" value="Ribosomal_eL24_CS"/>
</dbReference>
<dbReference type="InterPro" id="IPR011017">
    <property type="entry name" value="TRASH_dom"/>
</dbReference>
<dbReference type="PANTHER" id="PTHR10792">
    <property type="entry name" value="60S RIBOSOMAL PROTEIN L24"/>
    <property type="match status" value="1"/>
</dbReference>
<dbReference type="PANTHER" id="PTHR10792:SF8">
    <property type="entry name" value="RIBOSOME BIOGENESIS PROTEIN RLP24-RELATED"/>
    <property type="match status" value="1"/>
</dbReference>
<dbReference type="Pfam" id="PF01246">
    <property type="entry name" value="Ribosomal_L24e"/>
    <property type="match status" value="1"/>
</dbReference>
<dbReference type="SMART" id="SM00746">
    <property type="entry name" value="TRASH"/>
    <property type="match status" value="1"/>
</dbReference>
<dbReference type="SUPFAM" id="SSF57716">
    <property type="entry name" value="Glucocorticoid receptor-like (DNA-binding domain)"/>
    <property type="match status" value="1"/>
</dbReference>
<dbReference type="PROSITE" id="PS01073">
    <property type="entry name" value="RIBOSOMAL_L24E"/>
    <property type="match status" value="1"/>
</dbReference>
<gene>
    <name type="primary">rlp24</name>
    <name type="ORF">DDB_G0272789</name>
</gene>
<proteinExistence type="evidence at transcript level"/>
<sequence length="164" mass="19691">MRIEKCYFCSGPVYPGHGVMFVRNDCKQFRFCRSKCHKNFKLKRNPRKTRWTKAFRKLNGKEMTVDKTLEFEKKRNRPVKYDRELINNTIIAMARVQKIKERREKTFYKNRMEGVKGMQKKQKLKEINQNLSLIRGPSALNKLQERIKNNAEKIEQLTTTKMQS</sequence>